<dbReference type="EC" id="7.1.1.-"/>
<dbReference type="EMBL" id="AJ627251">
    <property type="protein sequence ID" value="CAF28649.1"/>
    <property type="molecule type" value="Genomic_DNA"/>
</dbReference>
<dbReference type="RefSeq" id="YP_053209.1">
    <property type="nucleotide sequence ID" value="NC_006050.1"/>
</dbReference>
<dbReference type="SMR" id="Q6EVZ7"/>
<dbReference type="GeneID" id="2896167"/>
<dbReference type="GO" id="GO:0009535">
    <property type="term" value="C:chloroplast thylakoid membrane"/>
    <property type="evidence" value="ECO:0007669"/>
    <property type="project" value="UniProtKB-SubCell"/>
</dbReference>
<dbReference type="GO" id="GO:0008137">
    <property type="term" value="F:NADH dehydrogenase (ubiquinone) activity"/>
    <property type="evidence" value="ECO:0007669"/>
    <property type="project" value="InterPro"/>
</dbReference>
<dbReference type="GO" id="GO:0048038">
    <property type="term" value="F:quinone binding"/>
    <property type="evidence" value="ECO:0007669"/>
    <property type="project" value="UniProtKB-KW"/>
</dbReference>
<dbReference type="FunFam" id="1.20.120.1200:FF:000002">
    <property type="entry name" value="NAD(P)H-quinone oxidoreductase subunit 6, chloroplastic"/>
    <property type="match status" value="1"/>
</dbReference>
<dbReference type="Gene3D" id="1.20.120.1200">
    <property type="entry name" value="NADH-ubiquinone/plastoquinone oxidoreductase chain 6, subunit NuoJ"/>
    <property type="match status" value="1"/>
</dbReference>
<dbReference type="InterPro" id="IPR050290">
    <property type="entry name" value="NAD(P)H-Q_Oxidoreduct_6"/>
</dbReference>
<dbReference type="InterPro" id="IPR001457">
    <property type="entry name" value="NADH_UbQ/plastoQ_OxRdtase_su6"/>
</dbReference>
<dbReference type="InterPro" id="IPR042106">
    <property type="entry name" value="Nuo/plastoQ_OxRdtase_6_NuoJ"/>
</dbReference>
<dbReference type="PANTHER" id="PTHR48479">
    <property type="entry name" value="NAD(P)H-QUINONE OXIDOREDUCTASE SUBUNIT 6, CHLOROPLASTIC"/>
    <property type="match status" value="1"/>
</dbReference>
<dbReference type="PANTHER" id="PTHR48479:SF1">
    <property type="entry name" value="NAD(P)H-QUINONE OXIDOREDUCTASE SUBUNIT 6, CHLOROPLASTIC"/>
    <property type="match status" value="1"/>
</dbReference>
<dbReference type="Pfam" id="PF00499">
    <property type="entry name" value="Oxidored_q3"/>
    <property type="match status" value="1"/>
</dbReference>
<accession>Q6EVZ7</accession>
<organism>
    <name type="scientific">Nymphaea alba</name>
    <name type="common">White water-lily</name>
    <name type="synonym">Castalia alba</name>
    <dbReference type="NCBI Taxonomy" id="34301"/>
    <lineage>
        <taxon>Eukaryota</taxon>
        <taxon>Viridiplantae</taxon>
        <taxon>Streptophyta</taxon>
        <taxon>Embryophyta</taxon>
        <taxon>Tracheophyta</taxon>
        <taxon>Spermatophyta</taxon>
        <taxon>Magnoliopsida</taxon>
        <taxon>Nymphaeales</taxon>
        <taxon>Nymphaeaceae</taxon>
        <taxon>Nymphaea</taxon>
    </lineage>
</organism>
<proteinExistence type="inferred from homology"/>
<feature type="chain" id="PRO_0000360275" description="NAD(P)H-quinone oxidoreductase subunit 6, chloroplastic">
    <location>
        <begin position="1"/>
        <end position="177"/>
    </location>
</feature>
<feature type="transmembrane region" description="Helical" evidence="2">
    <location>
        <begin position="10"/>
        <end position="30"/>
    </location>
</feature>
<feature type="transmembrane region" description="Helical" evidence="2">
    <location>
        <begin position="32"/>
        <end position="52"/>
    </location>
</feature>
<feature type="transmembrane region" description="Helical" evidence="2">
    <location>
        <begin position="61"/>
        <end position="81"/>
    </location>
</feature>
<feature type="transmembrane region" description="Helical" evidence="2">
    <location>
        <begin position="92"/>
        <end position="112"/>
    </location>
</feature>
<feature type="transmembrane region" description="Helical" evidence="2">
    <location>
        <begin position="152"/>
        <end position="172"/>
    </location>
</feature>
<reference key="1">
    <citation type="journal article" date="2004" name="Mol. Biol. Evol.">
        <title>The chloroplast genome of Nymphaea alba: whole-genome analyses and the problem of identifying the most basal angiosperm.</title>
        <authorList>
            <person name="Goremykin V.V."/>
            <person name="Hirsch-Ernst K.I."/>
            <person name="Woelfl S."/>
            <person name="Hellwig F.H."/>
        </authorList>
    </citation>
    <scope>NUCLEOTIDE SEQUENCE [LARGE SCALE GENOMIC DNA]</scope>
</reference>
<protein>
    <recommendedName>
        <fullName>NAD(P)H-quinone oxidoreductase subunit 6, chloroplastic</fullName>
        <ecNumber>7.1.1.-</ecNumber>
    </recommendedName>
    <alternativeName>
        <fullName>NAD(P)H dehydrogenase subunit 6</fullName>
    </alternativeName>
    <alternativeName>
        <fullName>NADH-plastoquinone oxidoreductase subunit 6</fullName>
    </alternativeName>
</protein>
<keyword id="KW-0150">Chloroplast</keyword>
<keyword id="KW-0472">Membrane</keyword>
<keyword id="KW-0520">NAD</keyword>
<keyword id="KW-0521">NADP</keyword>
<keyword id="KW-0934">Plastid</keyword>
<keyword id="KW-0618">Plastoquinone</keyword>
<keyword id="KW-0874">Quinone</keyword>
<keyword id="KW-0793">Thylakoid</keyword>
<keyword id="KW-1278">Translocase</keyword>
<keyword id="KW-0812">Transmembrane</keyword>
<keyword id="KW-1133">Transmembrane helix</keyword>
<keyword id="KW-0813">Transport</keyword>
<sequence length="177" mass="19471">MDLPAPIHDILLVSLGSGLIVGGLGVVLLTNPIYSAFSLGLVLVCISLFYIPSNSYFVAAAQLLIYVGAINVLILFAVMFMNGSEYYNYFHFWTVGDGFTSLVCTSIFFSLIATIPNTSWYGIIWTTRSNQIIEQDLTSNVQQIGIHLSTDFYLPFELISIILLVSLVGAIAMARRE</sequence>
<name>NU6C_NYMAL</name>
<comment type="function">
    <text evidence="1">NDH shuttles electrons from NAD(P)H:plastoquinone, via FMN and iron-sulfur (Fe-S) centers, to quinones in the photosynthetic chain and possibly in a chloroplast respiratory chain. The immediate electron acceptor for the enzyme in this species is believed to be plastoquinone. Couples the redox reaction to proton translocation, and thus conserves the redox energy in a proton gradient (By similarity).</text>
</comment>
<comment type="catalytic activity">
    <reaction>
        <text>a plastoquinone + NADH + (n+1) H(+)(in) = a plastoquinol + NAD(+) + n H(+)(out)</text>
        <dbReference type="Rhea" id="RHEA:42608"/>
        <dbReference type="Rhea" id="RHEA-COMP:9561"/>
        <dbReference type="Rhea" id="RHEA-COMP:9562"/>
        <dbReference type="ChEBI" id="CHEBI:15378"/>
        <dbReference type="ChEBI" id="CHEBI:17757"/>
        <dbReference type="ChEBI" id="CHEBI:57540"/>
        <dbReference type="ChEBI" id="CHEBI:57945"/>
        <dbReference type="ChEBI" id="CHEBI:62192"/>
    </reaction>
</comment>
<comment type="catalytic activity">
    <reaction>
        <text>a plastoquinone + NADPH + (n+1) H(+)(in) = a plastoquinol + NADP(+) + n H(+)(out)</text>
        <dbReference type="Rhea" id="RHEA:42612"/>
        <dbReference type="Rhea" id="RHEA-COMP:9561"/>
        <dbReference type="Rhea" id="RHEA-COMP:9562"/>
        <dbReference type="ChEBI" id="CHEBI:15378"/>
        <dbReference type="ChEBI" id="CHEBI:17757"/>
        <dbReference type="ChEBI" id="CHEBI:57783"/>
        <dbReference type="ChEBI" id="CHEBI:58349"/>
        <dbReference type="ChEBI" id="CHEBI:62192"/>
    </reaction>
</comment>
<comment type="subunit">
    <text evidence="1">NDH is composed of at least 16 different subunits, 5 of which are encoded in the nucleus.</text>
</comment>
<comment type="subcellular location">
    <subcellularLocation>
        <location evidence="1">Plastid</location>
        <location evidence="1">Chloroplast thylakoid membrane</location>
        <topology evidence="1">Multi-pass membrane protein</topology>
    </subcellularLocation>
</comment>
<comment type="similarity">
    <text evidence="3">Belongs to the complex I subunit 6 family.</text>
</comment>
<gene>
    <name type="primary">ndhG</name>
</gene>
<geneLocation type="chloroplast"/>
<evidence type="ECO:0000250" key="1"/>
<evidence type="ECO:0000255" key="2"/>
<evidence type="ECO:0000305" key="3"/>